<dbReference type="EMBL" id="BA000017">
    <property type="protein sequence ID" value="BAB57997.1"/>
    <property type="molecule type" value="Genomic_DNA"/>
</dbReference>
<dbReference type="RefSeq" id="WP_000737976.1">
    <property type="nucleotide sequence ID" value="NC_002758.2"/>
</dbReference>
<dbReference type="SMR" id="Q7A2Q4"/>
<dbReference type="BindingDB" id="Q7A2Q4"/>
<dbReference type="ChEMBL" id="CHEMBL4105947"/>
<dbReference type="KEGG" id="sav:SAV1835"/>
<dbReference type="HOGENOM" id="CLU_116220_0_0_9"/>
<dbReference type="PhylomeDB" id="Q7A2Q4"/>
<dbReference type="Proteomes" id="UP000002481">
    <property type="component" value="Chromosome"/>
</dbReference>
<dbReference type="GO" id="GO:0016020">
    <property type="term" value="C:membrane"/>
    <property type="evidence" value="ECO:0007669"/>
    <property type="project" value="UniProtKB-SubCell"/>
</dbReference>
<dbReference type="Gene3D" id="3.30.70.100">
    <property type="match status" value="1"/>
</dbReference>
<dbReference type="InterPro" id="IPR007138">
    <property type="entry name" value="ABM_dom"/>
</dbReference>
<dbReference type="InterPro" id="IPR011008">
    <property type="entry name" value="Dimeric_a/b-barrel"/>
</dbReference>
<dbReference type="InterPro" id="IPR050404">
    <property type="entry name" value="Heme-degrading_MO"/>
</dbReference>
<dbReference type="PANTHER" id="PTHR34474">
    <property type="entry name" value="SIGNAL TRANSDUCTION PROTEIN TRAP"/>
    <property type="match status" value="1"/>
</dbReference>
<dbReference type="PANTHER" id="PTHR34474:SF2">
    <property type="entry name" value="SIGNAL TRANSDUCTION PROTEIN TRAP"/>
    <property type="match status" value="1"/>
</dbReference>
<dbReference type="SUPFAM" id="SSF54909">
    <property type="entry name" value="Dimeric alpha+beta barrel"/>
    <property type="match status" value="1"/>
</dbReference>
<dbReference type="PROSITE" id="PS51725">
    <property type="entry name" value="ABM"/>
    <property type="match status" value="1"/>
</dbReference>
<reference key="1">
    <citation type="journal article" date="2001" name="Lancet">
        <title>Whole genome sequencing of meticillin-resistant Staphylococcus aureus.</title>
        <authorList>
            <person name="Kuroda M."/>
            <person name="Ohta T."/>
            <person name="Uchiyama I."/>
            <person name="Baba T."/>
            <person name="Yuzawa H."/>
            <person name="Kobayashi I."/>
            <person name="Cui L."/>
            <person name="Oguchi A."/>
            <person name="Aoki K."/>
            <person name="Nagai Y."/>
            <person name="Lian J.-Q."/>
            <person name="Ito T."/>
            <person name="Kanamori M."/>
            <person name="Matsumaru H."/>
            <person name="Maruyama A."/>
            <person name="Murakami H."/>
            <person name="Hosoyama A."/>
            <person name="Mizutani-Ui Y."/>
            <person name="Takahashi N.K."/>
            <person name="Sawano T."/>
            <person name="Inoue R."/>
            <person name="Kaito C."/>
            <person name="Sekimizu K."/>
            <person name="Hirakawa H."/>
            <person name="Kuhara S."/>
            <person name="Goto S."/>
            <person name="Yabuzaki J."/>
            <person name="Kanehisa M."/>
            <person name="Yamashita A."/>
            <person name="Oshima K."/>
            <person name="Furuya K."/>
            <person name="Yoshino C."/>
            <person name="Shiba T."/>
            <person name="Hattori M."/>
            <person name="Ogasawara N."/>
            <person name="Hayashi H."/>
            <person name="Hiramatsu K."/>
        </authorList>
    </citation>
    <scope>NUCLEOTIDE SEQUENCE [LARGE SCALE GENOMIC DNA]</scope>
    <source>
        <strain>Mu50 / ATCC 700699</strain>
    </source>
</reference>
<proteinExistence type="inferred from homology"/>
<keyword id="KW-0472">Membrane</keyword>
<keyword id="KW-0597">Phosphoprotein</keyword>
<keyword id="KW-0843">Virulence</keyword>
<sequence>MKKLYTSYGTYGFLHQIKINNPTHQLFQFSASDTSVIFEETDGETVLKSPSIYEVIKEIGEFSEHHFYCAIFIPSTEDHAYQLEKKLISVDDNFRNFGGFKSYRLLRPAKGTTYKIYFGFADRHAYEDFKQSDAFNDHFSKDALSHYFGSSGQHSSYFERYLYPIKE</sequence>
<evidence type="ECO:0000250" key="1"/>
<evidence type="ECO:0000305" key="2"/>
<gene>
    <name type="primary">traP</name>
    <name type="ordered locus">SAV1835</name>
</gene>
<name>TRAP_STAAM</name>
<comment type="function">
    <text evidence="1">Signal transduction protein, which is a major regulator of staphylococcal pathogenesis. Phosphorylated TRAP leads to the activation of agr system and consequent RNAIII synthesis resulting in the expression of several virulence factors. Up-regulates the expression of most toxins and genes known to be necessary for biofilm formation (By similarity).</text>
</comment>
<comment type="subcellular location">
    <subcellularLocation>
        <location>Membrane</location>
    </subcellularLocation>
    <text evidence="1">Membrane-associated.</text>
</comment>
<comment type="PTM">
    <text evidence="1">Each of the three conserved histidine residues contributes to TRAP phosphorylation. Phosphorylation is essential for TRAP activity (By similarity).</text>
</comment>
<comment type="PTM">
    <text evidence="1">Phosphorylation of TRAP is activated by RAP and necessary for the induction of RNAIII gene expression but not for ongoing transcription. TRAP is dephosphorylated from the mid-exponential phase of growth, which is when agr is activated and AIP is produced. RIP acts by inhibiting TRAP phosphorylation (By similarity).</text>
</comment>
<comment type="similarity">
    <text evidence="2">Belongs to the TRAP family.</text>
</comment>
<accession>Q7A2Q4</accession>
<feature type="chain" id="PRO_0000289340" description="Signal transduction protein TRAP">
    <location>
        <begin position="1"/>
        <end position="167"/>
    </location>
</feature>
<feature type="domain" description="ABM">
    <location>
        <begin position="67"/>
        <end position="158"/>
    </location>
</feature>
<feature type="modified residue" description="Phosphohistidine" evidence="1">
    <location>
        <position position="66"/>
    </location>
</feature>
<feature type="modified residue" description="Phosphohistidine" evidence="1">
    <location>
        <position position="79"/>
    </location>
</feature>
<feature type="modified residue" description="Phosphohistidine" evidence="1">
    <location>
        <position position="154"/>
    </location>
</feature>
<protein>
    <recommendedName>
        <fullName>Signal transduction protein TRAP</fullName>
    </recommendedName>
    <alternativeName>
        <fullName>Target of RNAIII-activating protein</fullName>
    </alternativeName>
</protein>
<organism>
    <name type="scientific">Staphylococcus aureus (strain Mu50 / ATCC 700699)</name>
    <dbReference type="NCBI Taxonomy" id="158878"/>
    <lineage>
        <taxon>Bacteria</taxon>
        <taxon>Bacillati</taxon>
        <taxon>Bacillota</taxon>
        <taxon>Bacilli</taxon>
        <taxon>Bacillales</taxon>
        <taxon>Staphylococcaceae</taxon>
        <taxon>Staphylococcus</taxon>
    </lineage>
</organism>